<reference key="1">
    <citation type="journal article" date="2008" name="J. Bacteriol.">
        <title>The pangenome structure of Escherichia coli: comparative genomic analysis of E. coli commensal and pathogenic isolates.</title>
        <authorList>
            <person name="Rasko D.A."/>
            <person name="Rosovitz M.J."/>
            <person name="Myers G.S.A."/>
            <person name="Mongodin E.F."/>
            <person name="Fricke W.F."/>
            <person name="Gajer P."/>
            <person name="Crabtree J."/>
            <person name="Sebaihia M."/>
            <person name="Thomson N.R."/>
            <person name="Chaudhuri R."/>
            <person name="Henderson I.R."/>
            <person name="Sperandio V."/>
            <person name="Ravel J."/>
        </authorList>
    </citation>
    <scope>NUCLEOTIDE SEQUENCE [LARGE SCALE GENOMIC DNA]</scope>
    <source>
        <strain>HS</strain>
    </source>
</reference>
<keyword id="KW-0997">Cell inner membrane</keyword>
<keyword id="KW-1003">Cell membrane</keyword>
<keyword id="KW-0472">Membrane</keyword>
<keyword id="KW-0812">Transmembrane</keyword>
<keyword id="KW-1133">Transmembrane helix</keyword>
<organism>
    <name type="scientific">Escherichia coli O9:H4 (strain HS)</name>
    <dbReference type="NCBI Taxonomy" id="331112"/>
    <lineage>
        <taxon>Bacteria</taxon>
        <taxon>Pseudomonadati</taxon>
        <taxon>Pseudomonadota</taxon>
        <taxon>Gammaproteobacteria</taxon>
        <taxon>Enterobacterales</taxon>
        <taxon>Enterobacteriaceae</taxon>
        <taxon>Escherichia</taxon>
    </lineage>
</organism>
<protein>
    <recommendedName>
        <fullName evidence="1">UPF0060 membrane protein YnfA</fullName>
    </recommendedName>
</protein>
<feature type="chain" id="PRO_1000057079" description="UPF0060 membrane protein YnfA">
    <location>
        <begin position="1"/>
        <end position="108"/>
    </location>
</feature>
<feature type="topological domain" description="Periplasmic" evidence="1">
    <location>
        <begin position="1"/>
        <end position="5"/>
    </location>
</feature>
<feature type="transmembrane region" description="Helical" evidence="1">
    <location>
        <begin position="6"/>
        <end position="26"/>
    </location>
</feature>
<feature type="topological domain" description="Cytoplasmic" evidence="1">
    <location>
        <begin position="27"/>
        <end position="30"/>
    </location>
</feature>
<feature type="transmembrane region" description="Helical" evidence="1">
    <location>
        <begin position="31"/>
        <end position="51"/>
    </location>
</feature>
<feature type="topological domain" description="Periplasmic" evidence="1">
    <location>
        <begin position="52"/>
        <end position="60"/>
    </location>
</feature>
<feature type="transmembrane region" description="Helical" evidence="1">
    <location>
        <begin position="61"/>
        <end position="81"/>
    </location>
</feature>
<feature type="topological domain" description="Cytoplasmic" evidence="1">
    <location>
        <begin position="82"/>
        <end position="84"/>
    </location>
</feature>
<feature type="transmembrane region" description="Helical" evidence="1">
    <location>
        <begin position="85"/>
        <end position="105"/>
    </location>
</feature>
<feature type="topological domain" description="Periplasmic" evidence="1">
    <location>
        <begin position="106"/>
        <end position="108"/>
    </location>
</feature>
<evidence type="ECO:0000255" key="1">
    <source>
        <dbReference type="HAMAP-Rule" id="MF_00010"/>
    </source>
</evidence>
<sequence length="108" mass="11920">MIKTTLLFFATALCEIIGCFLPWLWLKRNASIWLLLPAGISLALFVWLLTLHPAASGRVYAAYGGVYVCTALMWLRVVDGVKLTLYDWTGALIALCGMLIIVAGWGRT</sequence>
<name>YNFA_ECOHS</name>
<proteinExistence type="inferred from homology"/>
<dbReference type="EMBL" id="CP000802">
    <property type="protein sequence ID" value="ABV05976.1"/>
    <property type="molecule type" value="Genomic_DNA"/>
</dbReference>
<dbReference type="RefSeq" id="WP_000598292.1">
    <property type="nucleotide sequence ID" value="NC_009800.1"/>
</dbReference>
<dbReference type="SMR" id="A8A0C2"/>
<dbReference type="KEGG" id="ecx:EcHS_A1655"/>
<dbReference type="HOGENOM" id="CLU_117653_2_1_6"/>
<dbReference type="GO" id="GO:0005886">
    <property type="term" value="C:plasma membrane"/>
    <property type="evidence" value="ECO:0007669"/>
    <property type="project" value="UniProtKB-SubCell"/>
</dbReference>
<dbReference type="HAMAP" id="MF_00010">
    <property type="entry name" value="UPF0060"/>
    <property type="match status" value="1"/>
</dbReference>
<dbReference type="InterPro" id="IPR003844">
    <property type="entry name" value="UPF0060"/>
</dbReference>
<dbReference type="NCBIfam" id="NF002586">
    <property type="entry name" value="PRK02237.1"/>
    <property type="match status" value="1"/>
</dbReference>
<dbReference type="PANTHER" id="PTHR36116">
    <property type="entry name" value="UPF0060 MEMBRANE PROTEIN YNFA"/>
    <property type="match status" value="1"/>
</dbReference>
<dbReference type="PANTHER" id="PTHR36116:SF1">
    <property type="entry name" value="UPF0060 MEMBRANE PROTEIN YNFA"/>
    <property type="match status" value="1"/>
</dbReference>
<dbReference type="Pfam" id="PF02694">
    <property type="entry name" value="UPF0060"/>
    <property type="match status" value="1"/>
</dbReference>
<dbReference type="SUPFAM" id="SSF103481">
    <property type="entry name" value="Multidrug resistance efflux transporter EmrE"/>
    <property type="match status" value="1"/>
</dbReference>
<gene>
    <name evidence="1" type="primary">ynfA</name>
    <name type="ordered locus">EcHS_A1655</name>
</gene>
<accession>A8A0C2</accession>
<comment type="subcellular location">
    <subcellularLocation>
        <location evidence="1">Cell inner membrane</location>
        <topology evidence="1">Multi-pass membrane protein</topology>
    </subcellularLocation>
</comment>
<comment type="similarity">
    <text evidence="1">Belongs to the UPF0060 family.</text>
</comment>